<feature type="chain" id="PRO_1000079626" description="DNA-directed RNA polymerase subunit omega">
    <location>
        <begin position="1"/>
        <end position="97"/>
    </location>
</feature>
<keyword id="KW-0240">DNA-directed RNA polymerase</keyword>
<keyword id="KW-0548">Nucleotidyltransferase</keyword>
<keyword id="KW-0804">Transcription</keyword>
<keyword id="KW-0808">Transferase</keyword>
<dbReference type="EC" id="2.7.7.6" evidence="1"/>
<dbReference type="EMBL" id="CP000890">
    <property type="protein sequence ID" value="ABX77725.1"/>
    <property type="molecule type" value="Genomic_DNA"/>
</dbReference>
<dbReference type="RefSeq" id="WP_005771414.1">
    <property type="nucleotide sequence ID" value="NC_010117.1"/>
</dbReference>
<dbReference type="SMR" id="A9NB36"/>
<dbReference type="KEGG" id="cbs:COXBURSA331_A0408"/>
<dbReference type="HOGENOM" id="CLU_125406_5_1_6"/>
<dbReference type="GO" id="GO:0000428">
    <property type="term" value="C:DNA-directed RNA polymerase complex"/>
    <property type="evidence" value="ECO:0007669"/>
    <property type="project" value="UniProtKB-KW"/>
</dbReference>
<dbReference type="GO" id="GO:0003677">
    <property type="term" value="F:DNA binding"/>
    <property type="evidence" value="ECO:0007669"/>
    <property type="project" value="UniProtKB-UniRule"/>
</dbReference>
<dbReference type="GO" id="GO:0003899">
    <property type="term" value="F:DNA-directed RNA polymerase activity"/>
    <property type="evidence" value="ECO:0007669"/>
    <property type="project" value="UniProtKB-UniRule"/>
</dbReference>
<dbReference type="GO" id="GO:0006351">
    <property type="term" value="P:DNA-templated transcription"/>
    <property type="evidence" value="ECO:0007669"/>
    <property type="project" value="UniProtKB-UniRule"/>
</dbReference>
<dbReference type="Gene3D" id="3.90.940.10">
    <property type="match status" value="1"/>
</dbReference>
<dbReference type="HAMAP" id="MF_00366">
    <property type="entry name" value="RNApol_bact_RpoZ"/>
    <property type="match status" value="1"/>
</dbReference>
<dbReference type="InterPro" id="IPR003716">
    <property type="entry name" value="DNA-dir_RNA_pol_omega"/>
</dbReference>
<dbReference type="InterPro" id="IPR006110">
    <property type="entry name" value="Pol_omega/Rpo6/RPB6"/>
</dbReference>
<dbReference type="InterPro" id="IPR036161">
    <property type="entry name" value="RPB6/omega-like_sf"/>
</dbReference>
<dbReference type="NCBIfam" id="TIGR00690">
    <property type="entry name" value="rpoZ"/>
    <property type="match status" value="1"/>
</dbReference>
<dbReference type="PANTHER" id="PTHR34476">
    <property type="entry name" value="DNA-DIRECTED RNA POLYMERASE SUBUNIT OMEGA"/>
    <property type="match status" value="1"/>
</dbReference>
<dbReference type="PANTHER" id="PTHR34476:SF1">
    <property type="entry name" value="DNA-DIRECTED RNA POLYMERASE SUBUNIT OMEGA"/>
    <property type="match status" value="1"/>
</dbReference>
<dbReference type="Pfam" id="PF01192">
    <property type="entry name" value="RNA_pol_Rpb6"/>
    <property type="match status" value="1"/>
</dbReference>
<dbReference type="SMART" id="SM01409">
    <property type="entry name" value="RNA_pol_Rpb6"/>
    <property type="match status" value="1"/>
</dbReference>
<dbReference type="SUPFAM" id="SSF63562">
    <property type="entry name" value="RPB6/omega subunit-like"/>
    <property type="match status" value="1"/>
</dbReference>
<proteinExistence type="inferred from homology"/>
<sequence>MARVTVEDCLEHVENRFDLVLKAAKRAHILELGGAEPMVPRDNDKPAVLALREIAAGYDVTREGQEQETEEVDVDRNVLAETAKMNKAVASQKESEV</sequence>
<evidence type="ECO:0000255" key="1">
    <source>
        <dbReference type="HAMAP-Rule" id="MF_00366"/>
    </source>
</evidence>
<comment type="function">
    <text evidence="1">Promotes RNA polymerase assembly. Latches the N- and C-terminal regions of the beta' subunit thereby facilitating its interaction with the beta and alpha subunits.</text>
</comment>
<comment type="catalytic activity">
    <reaction evidence="1">
        <text>RNA(n) + a ribonucleoside 5'-triphosphate = RNA(n+1) + diphosphate</text>
        <dbReference type="Rhea" id="RHEA:21248"/>
        <dbReference type="Rhea" id="RHEA-COMP:14527"/>
        <dbReference type="Rhea" id="RHEA-COMP:17342"/>
        <dbReference type="ChEBI" id="CHEBI:33019"/>
        <dbReference type="ChEBI" id="CHEBI:61557"/>
        <dbReference type="ChEBI" id="CHEBI:140395"/>
        <dbReference type="EC" id="2.7.7.6"/>
    </reaction>
</comment>
<comment type="subunit">
    <text evidence="1">The RNAP catalytic core consists of 2 alpha, 1 beta, 1 beta' and 1 omega subunit. When a sigma factor is associated with the core the holoenzyme is formed, which can initiate transcription.</text>
</comment>
<comment type="similarity">
    <text evidence="1">Belongs to the RNA polymerase subunit omega family.</text>
</comment>
<reference key="1">
    <citation type="submission" date="2007-11" db="EMBL/GenBank/DDBJ databases">
        <title>Genome sequencing of phylogenetically and phenotypically diverse Coxiella burnetii isolates.</title>
        <authorList>
            <person name="Seshadri R."/>
            <person name="Samuel J.E."/>
        </authorList>
    </citation>
    <scope>NUCLEOTIDE SEQUENCE [LARGE SCALE GENOMIC DNA]</scope>
    <source>
        <strain>RSA 331 / Henzerling II</strain>
    </source>
</reference>
<accession>A9NB36</accession>
<organism>
    <name type="scientific">Coxiella burnetii (strain RSA 331 / Henzerling II)</name>
    <dbReference type="NCBI Taxonomy" id="360115"/>
    <lineage>
        <taxon>Bacteria</taxon>
        <taxon>Pseudomonadati</taxon>
        <taxon>Pseudomonadota</taxon>
        <taxon>Gammaproteobacteria</taxon>
        <taxon>Legionellales</taxon>
        <taxon>Coxiellaceae</taxon>
        <taxon>Coxiella</taxon>
    </lineage>
</organism>
<name>RPOZ_COXBR</name>
<protein>
    <recommendedName>
        <fullName evidence="1">DNA-directed RNA polymerase subunit omega</fullName>
        <shortName evidence="1">RNAP omega subunit</shortName>
        <ecNumber evidence="1">2.7.7.6</ecNumber>
    </recommendedName>
    <alternativeName>
        <fullName evidence="1">RNA polymerase omega subunit</fullName>
    </alternativeName>
    <alternativeName>
        <fullName evidence="1">Transcriptase subunit omega</fullName>
    </alternativeName>
</protein>
<gene>
    <name evidence="1" type="primary">rpoZ</name>
    <name type="ordered locus">COXBURSA331_A0408</name>
</gene>